<organism>
    <name type="scientific">Homo sapiens</name>
    <name type="common">Human</name>
    <dbReference type="NCBI Taxonomy" id="9606"/>
    <lineage>
        <taxon>Eukaryota</taxon>
        <taxon>Metazoa</taxon>
        <taxon>Chordata</taxon>
        <taxon>Craniata</taxon>
        <taxon>Vertebrata</taxon>
        <taxon>Euteleostomi</taxon>
        <taxon>Mammalia</taxon>
        <taxon>Eutheria</taxon>
        <taxon>Euarchontoglires</taxon>
        <taxon>Primates</taxon>
        <taxon>Haplorrhini</taxon>
        <taxon>Catarrhini</taxon>
        <taxon>Hominidae</taxon>
        <taxon>Homo</taxon>
    </lineage>
</organism>
<reference key="1">
    <citation type="journal article" date="1991" name="J. Biol. Chem.">
        <title>Identification and molecular cloning of two new 30-kDa insulin-like growth factor binding proteins isolated from adult human serum.</title>
        <authorList>
            <person name="Kiefer M.C."/>
            <person name="Masiarz F.R."/>
            <person name="Bauer D.M."/>
            <person name="Zapf J."/>
        </authorList>
    </citation>
    <scope>NUCLEOTIDE SEQUENCE [MRNA]</scope>
    <source>
        <tissue>Osteosarcoma</tissue>
    </source>
</reference>
<reference key="2">
    <citation type="journal article" date="1999" name="Mamm. Genome">
        <title>Characterization and chromosomal localization of the human insulin-like growth factor-binding protein 6 gene.</title>
        <authorList>
            <person name="Ehrenborg E."/>
            <person name="Zazzi H."/>
            <person name="Lagercrantz S."/>
            <person name="Granqvist M."/>
            <person name="Hillerbrand U."/>
            <person name="Allander S.V."/>
            <person name="Larsson C."/>
            <person name="Luthman H."/>
        </authorList>
    </citation>
    <scope>NUCLEOTIDE SEQUENCE [GENOMIC DNA]</scope>
</reference>
<reference key="3">
    <citation type="submission" date="2003-10" db="EMBL/GenBank/DDBJ databases">
        <authorList>
            <consortium name="NIEHS SNPs program"/>
        </authorList>
    </citation>
    <scope>NUCLEOTIDE SEQUENCE [GENOMIC DNA]</scope>
    <scope>VARIANTS GLY-128 AND GLN-217</scope>
</reference>
<reference key="4">
    <citation type="journal article" date="2004" name="Genome Res.">
        <title>The status, quality, and expansion of the NIH full-length cDNA project: the Mammalian Gene Collection (MGC).</title>
        <authorList>
            <consortium name="The MGC Project Team"/>
        </authorList>
    </citation>
    <scope>NUCLEOTIDE SEQUENCE [LARGE SCALE MRNA]</scope>
    <source>
        <tissue>Pancreas</tissue>
    </source>
</reference>
<reference key="5">
    <citation type="journal article" date="1991" name="Mol. Endocrinol.">
        <title>Isolation and molecular cloning of insulin-like growth factor-binding protein-6.</title>
        <authorList>
            <person name="Shimasaki S."/>
            <person name="Gao L."/>
            <person name="Shimonaka M."/>
            <person name="Ling N."/>
        </authorList>
    </citation>
    <scope>NUCLEOTIDE SEQUENCE [MRNA] OF 2-240</scope>
    <source>
        <tissue>Placenta</tissue>
    </source>
</reference>
<reference key="6">
    <citation type="journal article" date="1990" name="J. Biol. Chem.">
        <title>Isolation from adult human serum of four insulin-like growth factor (IGF) binding proteins and molecular cloning of one of them that is increased by IGF I administration and in extrapancreatic tumor hypoglycemia.</title>
        <authorList>
            <person name="Zapf J."/>
            <person name="Kiefer M."/>
            <person name="Merryweather J."/>
            <person name="Musiarz F."/>
            <person name="Bauer D."/>
            <person name="Born W."/>
            <person name="Fischer J.A."/>
            <person name="Froesch E.R."/>
        </authorList>
    </citation>
    <scope>PROTEIN SEQUENCE OF 28-57</scope>
    <source>
        <tissue>Serum</tissue>
    </source>
</reference>
<reference key="7">
    <citation type="journal article" date="1989" name="FEBS Lett.">
        <title>Isolation from human cerebrospinal fluid of a new insulin-like growth factor-binding protein with a selective affinity for IGF-II.</title>
        <authorList>
            <person name="Roghani M."/>
            <person name="Hossenlopp P."/>
            <person name="Lepage P."/>
            <person name="Balland A."/>
            <person name="Binoux M."/>
        </authorList>
    </citation>
    <scope>PRELIMINARY PROTEIN SEQUENCE OF 28-42</scope>
    <source>
        <tissue>Cerebrospinal fluid</tissue>
    </source>
</reference>
<reference key="8">
    <citation type="journal article" date="1990" name="J. Biol. Chem.">
        <title>Purification and properties of a novel insulin-like growth factor-II binding protein from transformed human fibroblasts.</title>
        <authorList>
            <person name="Martin J.L."/>
            <person name="Willetts K.E."/>
            <person name="Baxter R.C."/>
        </authorList>
    </citation>
    <scope>PROTEIN SEQUENCE OF 28-42</scope>
    <source>
        <tissue>Fibroblast</tissue>
    </source>
</reference>
<reference key="9">
    <citation type="journal article" date="1991" name="Biochem. Biophys. Res. Commun.">
        <title>A novel human insulin-like growth factor binding protein secreted by osteoblast-like cells.</title>
        <authorList>
            <person name="Andress D.L."/>
            <person name="Birnbaum R.S."/>
        </authorList>
    </citation>
    <scope>PROTEIN SEQUENCE OF 28-42</scope>
    <source>
        <tissue>Osteosarcoma</tissue>
    </source>
</reference>
<reference key="10">
    <citation type="journal article" date="1998" name="Biochemistry">
        <title>Identification of O-glycosylation sites and partial characterization of carbohydrate structure and disulfide linkages of human insulin-like growth factor binding protein 6.</title>
        <authorList>
            <person name="Neumann G.M."/>
            <person name="Marinaro J.A."/>
            <person name="Bach L.A."/>
        </authorList>
    </citation>
    <scope>GLYCOSYLATION AT THR-126; SER-144; THR-145; THR-146 AND SER-152</scope>
</reference>
<reference key="11">
    <citation type="journal article" date="1999" name="J. Biol. Chem.">
        <title>The N-terminal disulfide linkages of human insulin-like growth factor-binding protein-6 (hIGFBP-6) and hIGFBP-1 are different as determined by mass spectrometry.</title>
        <authorList>
            <person name="Neumann G.M."/>
            <person name="Bach L.A."/>
        </authorList>
    </citation>
    <scope>DISULFIDE BONDS</scope>
</reference>
<reference key="12">
    <citation type="journal article" date="2009" name="Nat. Methods">
        <title>Enrichment of glycopeptides for glycan structure and attachment site identification.</title>
        <authorList>
            <person name="Nilsson J."/>
            <person name="Rueetschi U."/>
            <person name="Halim A."/>
            <person name="Hesse C."/>
            <person name="Carlsohn E."/>
            <person name="Brinkmalm G."/>
            <person name="Larson G."/>
        </authorList>
    </citation>
    <scope>GLYCOSYLATION [LARGE SCALE ANALYSIS] AT THR-126</scope>
    <scope>STRUCTURE OF CARBOHYDRATES</scope>
    <source>
        <tissue>Cerebrospinal fluid</tissue>
    </source>
</reference>
<reference key="13">
    <citation type="journal article" date="2013" name="J. Biol. Chem.">
        <title>Prohibitin-2 binding modulates insulin-like growth factor-binding protein-6 (IGFBP-6)-induced rhabdomyosarcoma cell migration.</title>
        <authorList>
            <person name="Fu P."/>
            <person name="Yang Z."/>
            <person name="Bach L.A."/>
        </authorList>
    </citation>
    <scope>FUNCTION</scope>
    <scope>INTERACTION WITH PHB2</scope>
    <scope>SUBCELLULAR LOCATION</scope>
</reference>
<proteinExistence type="evidence at protein level"/>
<accession>P24592</accession>
<accession>Q14492</accession>
<dbReference type="EMBL" id="M62402">
    <property type="protein sequence ID" value="AAB06187.1"/>
    <property type="molecule type" value="mRNA"/>
</dbReference>
<dbReference type="EMBL" id="AJ006952">
    <property type="protein sequence ID" value="CAA07346.1"/>
    <property type="molecule type" value="Genomic_DNA"/>
</dbReference>
<dbReference type="EMBL" id="AY443494">
    <property type="protein sequence ID" value="AAR05445.1"/>
    <property type="molecule type" value="Genomic_DNA"/>
</dbReference>
<dbReference type="EMBL" id="BC003507">
    <property type="protein sequence ID" value="AAH03507.1"/>
    <property type="molecule type" value="mRNA"/>
</dbReference>
<dbReference type="EMBL" id="BC005007">
    <property type="protein sequence ID" value="AAH05007.1"/>
    <property type="molecule type" value="mRNA"/>
</dbReference>
<dbReference type="EMBL" id="BC010162">
    <property type="protein sequence ID" value="AAH10162.1"/>
    <property type="molecule type" value="mRNA"/>
</dbReference>
<dbReference type="EMBL" id="BC011708">
    <property type="protein sequence ID" value="AAH11708.1"/>
    <property type="molecule type" value="mRNA"/>
</dbReference>
<dbReference type="EMBL" id="M69054">
    <property type="protein sequence ID" value="AAA88070.1"/>
    <property type="molecule type" value="mRNA"/>
</dbReference>
<dbReference type="CCDS" id="CCDS8846.1"/>
<dbReference type="PIR" id="A39842">
    <property type="entry name" value="A39842"/>
</dbReference>
<dbReference type="PIR" id="S05699">
    <property type="entry name" value="S05699"/>
</dbReference>
<dbReference type="RefSeq" id="NP_002169.1">
    <property type="nucleotide sequence ID" value="NM_002178.3"/>
</dbReference>
<dbReference type="PDB" id="1RMJ">
    <property type="method" value="NMR"/>
    <property type="chains" value="A=161-240"/>
</dbReference>
<dbReference type="PDB" id="2JM2">
    <property type="method" value="NMR"/>
    <property type="chains" value="A=25-69"/>
</dbReference>
<dbReference type="PDBsum" id="1RMJ"/>
<dbReference type="PDBsum" id="2JM2"/>
<dbReference type="SMR" id="P24592"/>
<dbReference type="BioGRID" id="109710">
    <property type="interactions" value="50"/>
</dbReference>
<dbReference type="FunCoup" id="P24592">
    <property type="interactions" value="180"/>
</dbReference>
<dbReference type="IntAct" id="P24592">
    <property type="interactions" value="49"/>
</dbReference>
<dbReference type="MINT" id="P24592"/>
<dbReference type="STRING" id="9606.ENSP00000301464"/>
<dbReference type="BindingDB" id="P24592"/>
<dbReference type="ChEMBL" id="CHEMBL2139"/>
<dbReference type="DrugBank" id="DB01277">
    <property type="generic name" value="Mecasermin"/>
</dbReference>
<dbReference type="MEROPS" id="I31.952"/>
<dbReference type="GlyConnect" id="656">
    <property type="glycosylation" value="2 O-Linked glycans (1 site)"/>
</dbReference>
<dbReference type="GlyCosmos" id="P24592">
    <property type="glycosylation" value="5 sites, 6 glycans"/>
</dbReference>
<dbReference type="GlyGen" id="P24592">
    <property type="glycosylation" value="12 sites, 7 O-linked glycans (11 sites)"/>
</dbReference>
<dbReference type="iPTMnet" id="P24592"/>
<dbReference type="PhosphoSitePlus" id="P24592"/>
<dbReference type="SwissPalm" id="P24592"/>
<dbReference type="BioMuta" id="IGFBP6"/>
<dbReference type="DMDM" id="124068"/>
<dbReference type="jPOST" id="P24592"/>
<dbReference type="MassIVE" id="P24592"/>
<dbReference type="PaxDb" id="9606-ENSP00000301464"/>
<dbReference type="PeptideAtlas" id="P24592"/>
<dbReference type="ProteomicsDB" id="54218"/>
<dbReference type="Antibodypedia" id="1291">
    <property type="antibodies" value="366 antibodies from 34 providers"/>
</dbReference>
<dbReference type="DNASU" id="3489"/>
<dbReference type="Ensembl" id="ENST00000301464.4">
    <property type="protein sequence ID" value="ENSP00000301464.3"/>
    <property type="gene ID" value="ENSG00000167779.9"/>
</dbReference>
<dbReference type="GeneID" id="3489"/>
<dbReference type="KEGG" id="hsa:3489"/>
<dbReference type="MANE-Select" id="ENST00000301464.4">
    <property type="protein sequence ID" value="ENSP00000301464.3"/>
    <property type="RefSeq nucleotide sequence ID" value="NM_002178.3"/>
    <property type="RefSeq protein sequence ID" value="NP_002169.1"/>
</dbReference>
<dbReference type="UCSC" id="uc001sbu.2">
    <property type="organism name" value="human"/>
</dbReference>
<dbReference type="AGR" id="HGNC:5475"/>
<dbReference type="CTD" id="3489"/>
<dbReference type="DisGeNET" id="3489"/>
<dbReference type="GeneCards" id="IGFBP6"/>
<dbReference type="HGNC" id="HGNC:5475">
    <property type="gene designation" value="IGFBP6"/>
</dbReference>
<dbReference type="HPA" id="ENSG00000167779">
    <property type="expression patterns" value="Tissue enhanced (choroid)"/>
</dbReference>
<dbReference type="MIM" id="146735">
    <property type="type" value="gene"/>
</dbReference>
<dbReference type="neXtProt" id="NX_P24592"/>
<dbReference type="OpenTargets" id="ENSG00000167779"/>
<dbReference type="PharmGKB" id="PA29708"/>
<dbReference type="VEuPathDB" id="HostDB:ENSG00000167779"/>
<dbReference type="eggNOG" id="ENOG502QV3Q">
    <property type="taxonomic scope" value="Eukaryota"/>
</dbReference>
<dbReference type="GeneTree" id="ENSGT00940000160528"/>
<dbReference type="InParanoid" id="P24592"/>
<dbReference type="OMA" id="CVDELGA"/>
<dbReference type="OrthoDB" id="8875634at2759"/>
<dbReference type="PAN-GO" id="P24592">
    <property type="GO annotations" value="5 GO annotations based on evolutionary models"/>
</dbReference>
<dbReference type="PhylomeDB" id="P24592"/>
<dbReference type="TreeFam" id="TF331211"/>
<dbReference type="PathwayCommons" id="P24592"/>
<dbReference type="Reactome" id="R-HSA-381426">
    <property type="pathway name" value="Regulation of Insulin-like Growth Factor (IGF) transport and uptake by Insulin-like Growth Factor Binding Proteins (IGFBPs)"/>
</dbReference>
<dbReference type="SignaLink" id="P24592"/>
<dbReference type="BioGRID-ORCS" id="3489">
    <property type="hits" value="17 hits in 1149 CRISPR screens"/>
</dbReference>
<dbReference type="ChiTaRS" id="IGFBP6">
    <property type="organism name" value="human"/>
</dbReference>
<dbReference type="EvolutionaryTrace" id="P24592"/>
<dbReference type="GeneWiki" id="IGFBP6"/>
<dbReference type="GenomeRNAi" id="3489"/>
<dbReference type="Pharos" id="P24592">
    <property type="development level" value="Tchem"/>
</dbReference>
<dbReference type="PRO" id="PR:P24592"/>
<dbReference type="Proteomes" id="UP000005640">
    <property type="component" value="Chromosome 12"/>
</dbReference>
<dbReference type="RNAct" id="P24592">
    <property type="molecule type" value="protein"/>
</dbReference>
<dbReference type="Bgee" id="ENSG00000167779">
    <property type="expression patterns" value="Expressed in calcaneal tendon and 194 other cell types or tissues"/>
</dbReference>
<dbReference type="ExpressionAtlas" id="P24592">
    <property type="expression patterns" value="baseline and differential"/>
</dbReference>
<dbReference type="GO" id="GO:0005576">
    <property type="term" value="C:extracellular region"/>
    <property type="evidence" value="ECO:0000304"/>
    <property type="project" value="Reactome"/>
</dbReference>
<dbReference type="GO" id="GO:0005615">
    <property type="term" value="C:extracellular space"/>
    <property type="evidence" value="ECO:0000318"/>
    <property type="project" value="GO_Central"/>
</dbReference>
<dbReference type="GO" id="GO:0042568">
    <property type="term" value="C:insulin-like growth factor binary complex"/>
    <property type="evidence" value="ECO:0000315"/>
    <property type="project" value="CAFA"/>
</dbReference>
<dbReference type="GO" id="GO:0001968">
    <property type="term" value="F:fibronectin binding"/>
    <property type="evidence" value="ECO:0000318"/>
    <property type="project" value="GO_Central"/>
</dbReference>
<dbReference type="GO" id="GO:0042802">
    <property type="term" value="F:identical protein binding"/>
    <property type="evidence" value="ECO:0000353"/>
    <property type="project" value="IntAct"/>
</dbReference>
<dbReference type="GO" id="GO:0031994">
    <property type="term" value="F:insulin-like growth factor I binding"/>
    <property type="evidence" value="ECO:0000318"/>
    <property type="project" value="GO_Central"/>
</dbReference>
<dbReference type="GO" id="GO:0031995">
    <property type="term" value="F:insulin-like growth factor II binding"/>
    <property type="evidence" value="ECO:0000315"/>
    <property type="project" value="CAFA"/>
</dbReference>
<dbReference type="GO" id="GO:0005102">
    <property type="term" value="F:signaling receptor binding"/>
    <property type="evidence" value="ECO:0000304"/>
    <property type="project" value="ParkinsonsUK-UCL"/>
</dbReference>
<dbReference type="GO" id="GO:0016477">
    <property type="term" value="P:cell migration"/>
    <property type="evidence" value="ECO:0000314"/>
    <property type="project" value="UniProtKB"/>
</dbReference>
<dbReference type="GO" id="GO:0090090">
    <property type="term" value="P:negative regulation of canonical Wnt signaling pathway"/>
    <property type="evidence" value="ECO:0000304"/>
    <property type="project" value="ParkinsonsUK-UCL"/>
</dbReference>
<dbReference type="GO" id="GO:0008285">
    <property type="term" value="P:negative regulation of cell population proliferation"/>
    <property type="evidence" value="ECO:0000304"/>
    <property type="project" value="ProtInc"/>
</dbReference>
<dbReference type="GO" id="GO:0043410">
    <property type="term" value="P:positive regulation of MAPK cascade"/>
    <property type="evidence" value="ECO:0000314"/>
    <property type="project" value="UniProtKB"/>
</dbReference>
<dbReference type="GO" id="GO:0032874">
    <property type="term" value="P:positive regulation of stress-activated MAPK cascade"/>
    <property type="evidence" value="ECO:0000314"/>
    <property type="project" value="UniProtKB"/>
</dbReference>
<dbReference type="GO" id="GO:0043567">
    <property type="term" value="P:regulation of insulin-like growth factor receptor signaling pathway"/>
    <property type="evidence" value="ECO:0000318"/>
    <property type="project" value="GO_Central"/>
</dbReference>
<dbReference type="GO" id="GO:0007165">
    <property type="term" value="P:signal transduction"/>
    <property type="evidence" value="ECO:0000303"/>
    <property type="project" value="ProtInc"/>
</dbReference>
<dbReference type="CDD" id="cd00191">
    <property type="entry name" value="TY"/>
    <property type="match status" value="1"/>
</dbReference>
<dbReference type="FunFam" id="4.10.800.10:FF:000010">
    <property type="entry name" value="Insulin-like growth factor binding protein 6"/>
    <property type="match status" value="1"/>
</dbReference>
<dbReference type="FunFam" id="4.10.40.20:FF:000011">
    <property type="entry name" value="insulin-like growth factor-binding protein 6 isoform X1"/>
    <property type="match status" value="1"/>
</dbReference>
<dbReference type="Gene3D" id="4.10.40.20">
    <property type="match status" value="1"/>
</dbReference>
<dbReference type="Gene3D" id="4.10.800.10">
    <property type="entry name" value="Thyroglobulin type-1"/>
    <property type="match status" value="1"/>
</dbReference>
<dbReference type="InterPro" id="IPR009030">
    <property type="entry name" value="Growth_fac_rcpt_cys_sf"/>
</dbReference>
<dbReference type="InterPro" id="IPR022326">
    <property type="entry name" value="IGFBP-6"/>
</dbReference>
<dbReference type="InterPro" id="IPR000867">
    <property type="entry name" value="IGFBP-like"/>
</dbReference>
<dbReference type="InterPro" id="IPR022321">
    <property type="entry name" value="IGFBP_1-6_chordata"/>
</dbReference>
<dbReference type="InterPro" id="IPR000716">
    <property type="entry name" value="Thyroglobulin_1"/>
</dbReference>
<dbReference type="InterPro" id="IPR036857">
    <property type="entry name" value="Thyroglobulin_1_sf"/>
</dbReference>
<dbReference type="PANTHER" id="PTHR11551">
    <property type="entry name" value="INSULIN-LIKE GROWTH FACTOR BINDING PROTEIN"/>
    <property type="match status" value="1"/>
</dbReference>
<dbReference type="PANTHER" id="PTHR11551:SF14">
    <property type="entry name" value="INSULIN-LIKE GROWTH FACTOR-BINDING PROTEIN 6"/>
    <property type="match status" value="1"/>
</dbReference>
<dbReference type="Pfam" id="PF00086">
    <property type="entry name" value="Thyroglobulin_1"/>
    <property type="match status" value="1"/>
</dbReference>
<dbReference type="PRINTS" id="PR01976">
    <property type="entry name" value="IGFBPFAMILY"/>
</dbReference>
<dbReference type="PRINTS" id="PR01982">
    <property type="entry name" value="IGFBPFAMILY6"/>
</dbReference>
<dbReference type="SMART" id="SM00121">
    <property type="entry name" value="IB"/>
    <property type="match status" value="1"/>
</dbReference>
<dbReference type="SMART" id="SM00211">
    <property type="entry name" value="TY"/>
    <property type="match status" value="1"/>
</dbReference>
<dbReference type="SUPFAM" id="SSF57184">
    <property type="entry name" value="Growth factor receptor domain"/>
    <property type="match status" value="1"/>
</dbReference>
<dbReference type="SUPFAM" id="SSF57610">
    <property type="entry name" value="Thyroglobulin type-1 domain"/>
    <property type="match status" value="1"/>
</dbReference>
<dbReference type="PROSITE" id="PS51323">
    <property type="entry name" value="IGFBP_N_2"/>
    <property type="match status" value="1"/>
</dbReference>
<dbReference type="PROSITE" id="PS00484">
    <property type="entry name" value="THYROGLOBULIN_1_1"/>
    <property type="match status" value="1"/>
</dbReference>
<dbReference type="PROSITE" id="PS51162">
    <property type="entry name" value="THYROGLOBULIN_1_2"/>
    <property type="match status" value="1"/>
</dbReference>
<feature type="signal peptide" evidence="11 12 13">
    <location>
        <begin position="1"/>
        <end position="27"/>
    </location>
</feature>
<feature type="chain" id="PRO_0000014389" description="Insulin-like growth factor-binding protein 6">
    <location>
        <begin position="28"/>
        <end position="240"/>
    </location>
</feature>
<feature type="domain" description="IGFBP N-terminal" evidence="3">
    <location>
        <begin position="28"/>
        <end position="107"/>
    </location>
</feature>
<feature type="domain" description="Thyroglobulin type-1" evidence="2">
    <location>
        <begin position="160"/>
        <end position="234"/>
    </location>
</feature>
<feature type="region of interest" description="Disordered" evidence="4">
    <location>
        <begin position="109"/>
        <end position="160"/>
    </location>
</feature>
<feature type="region of interest" description="Disordered" evidence="4">
    <location>
        <begin position="217"/>
        <end position="240"/>
    </location>
</feature>
<feature type="compositionally biased region" description="Polar residues" evidence="4">
    <location>
        <begin position="139"/>
        <end position="155"/>
    </location>
</feature>
<feature type="compositionally biased region" description="Polar residues" evidence="4">
    <location>
        <begin position="228"/>
        <end position="240"/>
    </location>
</feature>
<feature type="glycosylation site" description="O-linked (HexNAc...) threonine" evidence="6 8">
    <location>
        <position position="126"/>
    </location>
</feature>
<feature type="glycosylation site" description="O-linked (HexNAc...) serine" evidence="1">
    <location>
        <position position="144"/>
    </location>
</feature>
<feature type="glycosylation site" description="O-linked (HexNAc...) threonine" evidence="1">
    <location>
        <position position="145"/>
    </location>
</feature>
<feature type="glycosylation site" description="O-linked (HexNAc...) threonine" evidence="1">
    <location>
        <position position="146"/>
    </location>
</feature>
<feature type="glycosylation site" description="O-linked (HexNAc...) serine" evidence="1">
    <location>
        <position position="152"/>
    </location>
</feature>
<feature type="disulfide bond" evidence="3 5">
    <location>
        <begin position="29"/>
        <end position="32"/>
    </location>
</feature>
<feature type="disulfide bond" evidence="3 5">
    <location>
        <begin position="40"/>
        <end position="44"/>
    </location>
</feature>
<feature type="disulfide bond" evidence="3 5">
    <location>
        <begin position="57"/>
        <end position="63"/>
    </location>
</feature>
<feature type="disulfide bond" evidence="3 5">
    <location>
        <begin position="71"/>
        <end position="84"/>
    </location>
</feature>
<feature type="disulfide bond" evidence="3 5">
    <location>
        <begin position="78"/>
        <end position="104"/>
    </location>
</feature>
<feature type="disulfide bond" evidence="2 5">
    <location>
        <begin position="163"/>
        <end position="190"/>
    </location>
</feature>
<feature type="disulfide bond" evidence="2 5">
    <location>
        <begin position="201"/>
        <end position="212"/>
    </location>
</feature>
<feature type="disulfide bond" evidence="2 5">
    <location>
        <begin position="214"/>
        <end position="234"/>
    </location>
</feature>
<feature type="sequence variant" id="VAR_018932" description="In dbSNP:rs9658616." evidence="9">
    <original>R</original>
    <variation>G</variation>
    <location>
        <position position="128"/>
    </location>
</feature>
<feature type="sequence variant" id="VAR_049565" description="In dbSNP:rs34995393.">
    <original>R</original>
    <variation>L</variation>
    <location>
        <position position="134"/>
    </location>
</feature>
<feature type="sequence variant" id="VAR_018933" description="In dbSNP:rs6413498." evidence="9">
    <original>R</original>
    <variation>Q</variation>
    <location>
        <position position="217"/>
    </location>
</feature>
<feature type="sequence variant" id="VAR_011907" description="In dbSNP:rs1053134.">
    <original>T</original>
    <variation>P</variation>
    <location>
        <position position="236"/>
    </location>
</feature>
<feature type="sequence conflict" description="In Ref. 5; AAA88070." evidence="10" ref="5">
    <original>T</original>
    <variation>C</variation>
    <location>
        <position position="2"/>
    </location>
</feature>
<feature type="sequence conflict" description="In Ref. 6; AA sequence." evidence="10" ref="6">
    <original>RC</original>
    <variation>AA</variation>
    <location>
        <begin position="28"/>
        <end position="29"/>
    </location>
</feature>
<feature type="sequence conflict" description="In Ref. 8; AA sequence." evidence="10" ref="8">
    <original>RC</original>
    <variation>LA</variation>
    <location>
        <begin position="28"/>
        <end position="29"/>
    </location>
</feature>
<feature type="sequence conflict" description="In Ref. 6; AA sequence." evidence="10" ref="6">
    <original>C</original>
    <variation>H</variation>
    <location>
        <position position="32"/>
    </location>
</feature>
<feature type="sequence conflict" description="In Ref. 6; AA sequence." evidence="10" ref="6">
    <original>EGC</original>
    <variation>QGG</variation>
    <location>
        <begin position="55"/>
        <end position="57"/>
    </location>
</feature>
<feature type="turn" evidence="17">
    <location>
        <begin position="35"/>
        <end position="39"/>
    </location>
</feature>
<feature type="strand" evidence="17">
    <location>
        <begin position="48"/>
        <end position="51"/>
    </location>
</feature>
<feature type="strand" evidence="17">
    <location>
        <begin position="55"/>
        <end position="59"/>
    </location>
</feature>
<feature type="helix" evidence="17">
    <location>
        <begin position="60"/>
        <end position="63"/>
    </location>
</feature>
<feature type="helix" evidence="16">
    <location>
        <begin position="162"/>
        <end position="177"/>
    </location>
</feature>
<feature type="turn" evidence="16">
    <location>
        <begin position="179"/>
        <end position="181"/>
    </location>
</feature>
<feature type="strand" evidence="16">
    <location>
        <begin position="182"/>
        <end position="188"/>
    </location>
</feature>
<feature type="strand" evidence="16">
    <location>
        <begin position="198"/>
        <end position="208"/>
    </location>
</feature>
<feature type="strand" evidence="16">
    <location>
        <begin position="212"/>
        <end position="215"/>
    </location>
</feature>
<feature type="turn" evidence="16">
    <location>
        <begin position="226"/>
        <end position="228"/>
    </location>
</feature>
<feature type="turn" evidence="16">
    <location>
        <begin position="231"/>
        <end position="233"/>
    </location>
</feature>
<feature type="strand" evidence="16">
    <location>
        <begin position="234"/>
        <end position="236"/>
    </location>
</feature>
<name>IBP6_HUMAN</name>
<gene>
    <name evidence="15" type="primary">IGFBP6</name>
    <name type="synonym">IBP6</name>
</gene>
<keyword id="KW-0002">3D-structure</keyword>
<keyword id="KW-0903">Direct protein sequencing</keyword>
<keyword id="KW-1015">Disulfide bond</keyword>
<keyword id="KW-0325">Glycoprotein</keyword>
<keyword id="KW-0340">Growth factor binding</keyword>
<keyword id="KW-1267">Proteomics identification</keyword>
<keyword id="KW-1185">Reference proteome</keyword>
<keyword id="KW-0964">Secreted</keyword>
<keyword id="KW-0732">Signal</keyword>
<evidence type="ECO:0000250" key="1"/>
<evidence type="ECO:0000255" key="2">
    <source>
        <dbReference type="PROSITE-ProRule" id="PRU00500"/>
    </source>
</evidence>
<evidence type="ECO:0000255" key="3">
    <source>
        <dbReference type="PROSITE-ProRule" id="PRU00653"/>
    </source>
</evidence>
<evidence type="ECO:0000256" key="4">
    <source>
        <dbReference type="SAM" id="MobiDB-lite"/>
    </source>
</evidence>
<evidence type="ECO:0000269" key="5">
    <source>
    </source>
</evidence>
<evidence type="ECO:0000269" key="6">
    <source>
    </source>
</evidence>
<evidence type="ECO:0000269" key="7">
    <source>
    </source>
</evidence>
<evidence type="ECO:0000269" key="8">
    <source>
    </source>
</evidence>
<evidence type="ECO:0000269" key="9">
    <source ref="3"/>
</evidence>
<evidence type="ECO:0000305" key="10"/>
<evidence type="ECO:0000305" key="11">
    <source>
    </source>
</evidence>
<evidence type="ECO:0000305" key="12">
    <source>
    </source>
</evidence>
<evidence type="ECO:0000305" key="13">
    <source>
    </source>
</evidence>
<evidence type="ECO:0000305" key="14">
    <source>
    </source>
</evidence>
<evidence type="ECO:0000312" key="15">
    <source>
        <dbReference type="HGNC" id="HGNC:5475"/>
    </source>
</evidence>
<evidence type="ECO:0007829" key="16">
    <source>
        <dbReference type="PDB" id="1RMJ"/>
    </source>
</evidence>
<evidence type="ECO:0007829" key="17">
    <source>
        <dbReference type="PDB" id="2JM2"/>
    </source>
</evidence>
<comment type="function">
    <text evidence="7">IGF-binding proteins prolong the half-life of the IGFs and have been shown to either inhibit or stimulate the growth promoting effects of the IGFs on cell culture. They alter the interaction of IGFs with their cell surface receptors. Activates the MAPK signaling pathway and induces cell migration (PubMed:24003225).</text>
</comment>
<comment type="subunit">
    <text evidence="7">Interacts (via C-terminal domain) with PHB2.</text>
</comment>
<comment type="interaction">
    <interactant intactId="EBI-947015">
        <id>P24592</id>
    </interactant>
    <interactant intactId="EBI-1211484">
        <id>P05187</id>
        <label>ALPP</label>
    </interactant>
    <organismsDiffer>false</organismsDiffer>
    <experiments>3</experiments>
</comment>
<comment type="interaction">
    <interactant intactId="EBI-947015">
        <id>P24592</id>
    </interactant>
    <interactant intactId="EBI-17183751">
        <id>X5D778</id>
        <label>ANKRD11</label>
    </interactant>
    <organismsDiffer>false</organismsDiffer>
    <experiments>3</experiments>
</comment>
<comment type="interaction">
    <interactant intactId="EBI-947015">
        <id>P24592</id>
    </interactant>
    <interactant intactId="EBI-745213">
        <id>P29972</id>
        <label>AQP1</label>
    </interactant>
    <organismsDiffer>false</organismsDiffer>
    <experiments>3</experiments>
</comment>
<comment type="interaction">
    <interactant intactId="EBI-947015">
        <id>P24592</id>
    </interactant>
    <interactant intactId="EBI-12049899">
        <id>Q96LT6</id>
        <label>C1orf74</label>
    </interactant>
    <organismsDiffer>false</organismsDiffer>
    <experiments>3</experiments>
</comment>
<comment type="interaction">
    <interactant intactId="EBI-947015">
        <id>P24592</id>
    </interactant>
    <interactant intactId="EBI-744311">
        <id>Q8IYX3</id>
        <label>CCDC116</label>
    </interactant>
    <organismsDiffer>false</organismsDiffer>
    <experiments>3</experiments>
</comment>
<comment type="interaction">
    <interactant intactId="EBI-947015">
        <id>P24592</id>
    </interactant>
    <interactant intactId="EBI-10258115">
        <id>Q7Z6N9</id>
        <label>CCDC28A</label>
    </interactant>
    <organismsDiffer>false</organismsDiffer>
    <experiments>3</experiments>
</comment>
<comment type="interaction">
    <interactant intactId="EBI-947015">
        <id>P24592</id>
    </interactant>
    <interactant intactId="EBI-358858">
        <id>O14735</id>
        <label>CDIPT</label>
    </interactant>
    <organismsDiffer>false</organismsDiffer>
    <experiments>3</experiments>
</comment>
<comment type="interaction">
    <interactant intactId="EBI-947015">
        <id>P24592</id>
    </interactant>
    <interactant intactId="EBI-10192698">
        <id>Q02930-3</id>
        <label>CREB5</label>
    </interactant>
    <organismsDiffer>false</organismsDiffer>
    <experiments>3</experiments>
</comment>
<comment type="interaction">
    <interactant intactId="EBI-947015">
        <id>P24592</id>
    </interactant>
    <interactant intactId="EBI-536772">
        <id>Q12805</id>
        <label>EFEMP1</label>
    </interactant>
    <organismsDiffer>false</organismsDiffer>
    <experiments>3</experiments>
</comment>
<comment type="interaction">
    <interactant intactId="EBI-947015">
        <id>P24592</id>
    </interactant>
    <interactant intactId="EBI-743414">
        <id>O95967</id>
        <label>EFEMP2</label>
    </interactant>
    <organismsDiffer>false</organismsDiffer>
    <experiments>3</experiments>
</comment>
<comment type="interaction">
    <interactant intactId="EBI-947015">
        <id>P24592</id>
    </interactant>
    <interactant intactId="EBI-744099">
        <id>Q9H0I2</id>
        <label>ENKD1</label>
    </interactant>
    <organismsDiffer>false</organismsDiffer>
    <experiments>3</experiments>
</comment>
<comment type="interaction">
    <interactant intactId="EBI-947015">
        <id>P24592</id>
    </interactant>
    <interactant intactId="EBI-946972">
        <id>Q9UM22</id>
        <label>EPDR1</label>
    </interactant>
    <organismsDiffer>false</organismsDiffer>
    <experiments>3</experiments>
</comment>
<comment type="interaction">
    <interactant intactId="EBI-947015">
        <id>P24592</id>
    </interactant>
    <interactant intactId="EBI-1052570">
        <id>O95995</id>
        <label>GAS8</label>
    </interactant>
    <organismsDiffer>false</organismsDiffer>
    <experiments>3</experiments>
</comment>
<comment type="interaction">
    <interactant intactId="EBI-947015">
        <id>P24592</id>
    </interactant>
    <interactant intactId="EBI-2515857">
        <id>O43681</id>
        <label>GET3</label>
    </interactant>
    <organismsDiffer>false</organismsDiffer>
    <experiments>3</experiments>
</comment>
<comment type="interaction">
    <interactant intactId="EBI-947015">
        <id>P24592</id>
    </interactant>
    <interactant intactId="EBI-947015">
        <id>P24592</id>
        <label>IGFBP6</label>
    </interactant>
    <organismsDiffer>false</organismsDiffer>
    <experiments>3</experiments>
</comment>
<comment type="interaction">
    <interactant intactId="EBI-947015">
        <id>P24592</id>
    </interactant>
    <interactant intactId="EBI-10171774">
        <id>P60410</id>
        <label>KRTAP10-8</label>
    </interactant>
    <organismsDiffer>false</organismsDiffer>
    <experiments>3</experiments>
</comment>
<comment type="interaction">
    <interactant intactId="EBI-947015">
        <id>P24592</id>
    </interactant>
    <interactant intactId="EBI-11987425">
        <id>Q6L8G8</id>
        <label>KRTAP5-7</label>
    </interactant>
    <organismsDiffer>false</organismsDiffer>
    <experiments>3</experiments>
</comment>
<comment type="interaction">
    <interactant intactId="EBI-947015">
        <id>P24592</id>
    </interactant>
    <interactant intactId="EBI-3958099">
        <id>P26371</id>
        <label>KRTAP5-9</label>
    </interactant>
    <organismsDiffer>false</organismsDiffer>
    <experiments>3</experiments>
</comment>
<comment type="interaction">
    <interactant intactId="EBI-947015">
        <id>P24592</id>
    </interactant>
    <interactant intactId="EBI-11978579">
        <id>O95983-2</id>
        <label>MBD3</label>
    </interactant>
    <organismsDiffer>false</organismsDiffer>
    <experiments>3</experiments>
</comment>
<comment type="interaction">
    <interactant intactId="EBI-947015">
        <id>P24592</id>
    </interactant>
    <interactant intactId="EBI-8025850">
        <id>O14770-4</id>
        <label>MEIS2</label>
    </interactant>
    <organismsDiffer>false</organismsDiffer>
    <experiments>3</experiments>
</comment>
<comment type="interaction">
    <interactant intactId="EBI-947015">
        <id>P24592</id>
    </interactant>
    <interactant intactId="EBI-11991020">
        <id>A6NI15</id>
        <label>MSGN1</label>
    </interactant>
    <organismsDiffer>false</organismsDiffer>
    <experiments>3</experiments>
</comment>
<comment type="interaction">
    <interactant intactId="EBI-947015">
        <id>P24592</id>
    </interactant>
    <interactant intactId="EBI-749635">
        <id>P61601</id>
        <label>NCALD</label>
    </interactant>
    <organismsDiffer>false</organismsDiffer>
    <experiments>3</experiments>
</comment>
<comment type="interaction">
    <interactant intactId="EBI-947015">
        <id>P24592</id>
    </interactant>
    <interactant intactId="EBI-12069346">
        <id>Q6IQ23-2</id>
        <label>PLEKHA7</label>
    </interactant>
    <organismsDiffer>false</organismsDiffer>
    <experiments>3</experiments>
</comment>
<comment type="interaction">
    <interactant intactId="EBI-947015">
        <id>P24592</id>
    </interactant>
    <interactant intactId="EBI-17236143">
        <id>Q12837</id>
        <label>POU4F2</label>
    </interactant>
    <organismsDiffer>false</organismsDiffer>
    <experiments>3</experiments>
</comment>
<comment type="interaction">
    <interactant intactId="EBI-947015">
        <id>P24592</id>
    </interactant>
    <interactant intactId="EBI-536715">
        <id>P53611</id>
        <label>RABGGTB</label>
    </interactant>
    <organismsDiffer>false</organismsDiffer>
    <experiments>3</experiments>
</comment>
<comment type="interaction">
    <interactant intactId="EBI-947015">
        <id>P24592</id>
    </interactant>
    <interactant intactId="EBI-310569">
        <id>Q6VN20</id>
        <label>RANBP10</label>
    </interactant>
    <organismsDiffer>false</organismsDiffer>
    <experiments>3</experiments>
</comment>
<comment type="interaction">
    <interactant intactId="EBI-947015">
        <id>P24592</id>
    </interactant>
    <interactant intactId="EBI-727004">
        <id>O00560</id>
        <label>SDCBP</label>
    </interactant>
    <organismsDiffer>false</organismsDiffer>
    <experiments>3</experiments>
</comment>
<comment type="interaction">
    <interactant intactId="EBI-947015">
        <id>P24592</id>
    </interactant>
    <interactant intactId="EBI-347996">
        <id>O43765</id>
        <label>SGTA</label>
    </interactant>
    <organismsDiffer>false</organismsDiffer>
    <experiments>3</experiments>
</comment>
<comment type="interaction">
    <interactant intactId="EBI-947015">
        <id>P24592</id>
    </interactant>
    <interactant intactId="EBI-750494">
        <id>P49901</id>
        <label>SMCP</label>
    </interactant>
    <organismsDiffer>false</organismsDiffer>
    <experiments>3</experiments>
</comment>
<comment type="interaction">
    <interactant intactId="EBI-947015">
        <id>P24592</id>
    </interactant>
    <interactant intactId="EBI-749370">
        <id>Q9BSL1</id>
        <label>UBAC1</label>
    </interactant>
    <organismsDiffer>false</organismsDiffer>
    <experiments>3</experiments>
</comment>
<comment type="interaction">
    <interactant intactId="EBI-947015">
        <id>P24592</id>
    </interactant>
    <interactant intactId="EBI-741480">
        <id>Q9UMX0</id>
        <label>UBQLN1</label>
    </interactant>
    <organismsDiffer>false</organismsDiffer>
    <experiments>3</experiments>
</comment>
<comment type="interaction">
    <interactant intactId="EBI-947015">
        <id>P24592</id>
    </interactant>
    <interactant intactId="EBI-947187">
        <id>Q9UHD9</id>
        <label>UBQLN2</label>
    </interactant>
    <organismsDiffer>false</organismsDiffer>
    <experiments>3</experiments>
</comment>
<comment type="interaction">
    <interactant intactId="EBI-947015">
        <id>P24592</id>
    </interactant>
    <interactant intactId="EBI-740727">
        <id>Q8TAU3</id>
        <label>ZNF417</label>
    </interactant>
    <organismsDiffer>false</organismsDiffer>
    <experiments>5</experiments>
</comment>
<comment type="interaction">
    <interactant intactId="EBI-947015">
        <id>P24592</id>
    </interactant>
    <interactant intactId="EBI-6427977">
        <id>Q96SQ5</id>
        <label>ZNF587</label>
    </interactant>
    <organismsDiffer>false</organismsDiffer>
    <experiments>3</experiments>
</comment>
<comment type="subcellular location">
    <subcellularLocation>
        <location evidence="14">Secreted</location>
    </subcellularLocation>
</comment>
<comment type="PTM">
    <text evidence="6 8">O-linked glycans consist of hexose (probably Gal), N-acetylhexosamine (probably GalNAc) and sialic acid residues. O-glycosylated with core 1 or possibly core 8 glycans. O-glycosylated on one site only in the region AA 143-168 in cerebrospinal fluid.</text>
</comment>
<sequence>MTPHRLLPPLLLLLALLLAASPGGALARCPGCGQGVQAGCPGGCVEEEDGGSPAEGCAEAEGCLRREGQECGVYTPNCAPGLQCHPPKDDEAPLRALLLGRGRCLPARAPAVAEENPKESKPQAGTARPQDVNRRDQQRNPGTSTTPSQPNSAGVQDTEMGPCRRHLDSVLQQLQTEVYRGAQTLYVPNCDHRGFYRKRQCRSSQGQRRGPCWCVDRMGKSLPGSPDGNGSSSCPTGSSG</sequence>
<protein>
    <recommendedName>
        <fullName evidence="10">Insulin-like growth factor-binding protein 6</fullName>
        <shortName>IBP-6</shortName>
        <shortName>IGF-binding protein 6</shortName>
        <shortName>IGFBP-6</shortName>
    </recommendedName>
</protein>